<evidence type="ECO:0000255" key="1">
    <source>
        <dbReference type="HAMAP-Rule" id="MF_00508"/>
    </source>
</evidence>
<evidence type="ECO:0000305" key="2"/>
<gene>
    <name evidence="1" type="primary">rps10</name>
    <name type="ordered locus">Mpal_1554</name>
</gene>
<reference key="1">
    <citation type="journal article" date="2015" name="Genome Announc.">
        <title>Complete Genome Sequence of Methanosphaerula palustris E1-9CT, a Hydrogenotrophic Methanogen Isolated from a Minerotrophic Fen Peatland.</title>
        <authorList>
            <person name="Cadillo-Quiroz H."/>
            <person name="Browne P."/>
            <person name="Kyrpides N."/>
            <person name="Woyke T."/>
            <person name="Goodwin L."/>
            <person name="Detter C."/>
            <person name="Yavitt J.B."/>
            <person name="Zinder S.H."/>
        </authorList>
    </citation>
    <scope>NUCLEOTIDE SEQUENCE [LARGE SCALE GENOMIC DNA]</scope>
    <source>
        <strain>ATCC BAA-1556 / DSM 19958 / E1-9c</strain>
    </source>
</reference>
<dbReference type="EMBL" id="CP001338">
    <property type="protein sequence ID" value="ACL16867.1"/>
    <property type="molecule type" value="Genomic_DNA"/>
</dbReference>
<dbReference type="RefSeq" id="WP_012618186.1">
    <property type="nucleotide sequence ID" value="NC_011832.1"/>
</dbReference>
<dbReference type="SMR" id="B8GIQ4"/>
<dbReference type="STRING" id="521011.Mpal_1554"/>
<dbReference type="GeneID" id="7271099"/>
<dbReference type="KEGG" id="mpl:Mpal_1554"/>
<dbReference type="eggNOG" id="arCOG01758">
    <property type="taxonomic scope" value="Archaea"/>
</dbReference>
<dbReference type="HOGENOM" id="CLU_122625_0_1_2"/>
<dbReference type="OrthoDB" id="371736at2157"/>
<dbReference type="Proteomes" id="UP000002457">
    <property type="component" value="Chromosome"/>
</dbReference>
<dbReference type="GO" id="GO:0015935">
    <property type="term" value="C:small ribosomal subunit"/>
    <property type="evidence" value="ECO:0007669"/>
    <property type="project" value="InterPro"/>
</dbReference>
<dbReference type="GO" id="GO:0003735">
    <property type="term" value="F:structural constituent of ribosome"/>
    <property type="evidence" value="ECO:0007669"/>
    <property type="project" value="InterPro"/>
</dbReference>
<dbReference type="GO" id="GO:0000049">
    <property type="term" value="F:tRNA binding"/>
    <property type="evidence" value="ECO:0007669"/>
    <property type="project" value="UniProtKB-UniRule"/>
</dbReference>
<dbReference type="GO" id="GO:0006412">
    <property type="term" value="P:translation"/>
    <property type="evidence" value="ECO:0007669"/>
    <property type="project" value="UniProtKB-UniRule"/>
</dbReference>
<dbReference type="FunFam" id="3.30.70.600:FF:000004">
    <property type="entry name" value="30S ribosomal protein S10"/>
    <property type="match status" value="1"/>
</dbReference>
<dbReference type="Gene3D" id="3.30.70.600">
    <property type="entry name" value="Ribosomal protein S10 domain"/>
    <property type="match status" value="1"/>
</dbReference>
<dbReference type="HAMAP" id="MF_00508">
    <property type="entry name" value="Ribosomal_uS10"/>
    <property type="match status" value="1"/>
</dbReference>
<dbReference type="InterPro" id="IPR001848">
    <property type="entry name" value="Ribosomal_uS10"/>
</dbReference>
<dbReference type="InterPro" id="IPR018268">
    <property type="entry name" value="Ribosomal_uS10_CS"/>
</dbReference>
<dbReference type="InterPro" id="IPR027486">
    <property type="entry name" value="Ribosomal_uS10_dom"/>
</dbReference>
<dbReference type="InterPro" id="IPR036838">
    <property type="entry name" value="Ribosomal_uS10_dom_sf"/>
</dbReference>
<dbReference type="InterPro" id="IPR005729">
    <property type="entry name" value="Ribosomal_uS10_euk/arc"/>
</dbReference>
<dbReference type="NCBIfam" id="TIGR01046">
    <property type="entry name" value="uS10_euk_arch"/>
    <property type="match status" value="1"/>
</dbReference>
<dbReference type="PANTHER" id="PTHR11700">
    <property type="entry name" value="30S RIBOSOMAL PROTEIN S10 FAMILY MEMBER"/>
    <property type="match status" value="1"/>
</dbReference>
<dbReference type="Pfam" id="PF00338">
    <property type="entry name" value="Ribosomal_S10"/>
    <property type="match status" value="1"/>
</dbReference>
<dbReference type="PRINTS" id="PR00971">
    <property type="entry name" value="RIBOSOMALS10"/>
</dbReference>
<dbReference type="SMART" id="SM01403">
    <property type="entry name" value="Ribosomal_S10"/>
    <property type="match status" value="1"/>
</dbReference>
<dbReference type="SUPFAM" id="SSF54999">
    <property type="entry name" value="Ribosomal protein S10"/>
    <property type="match status" value="1"/>
</dbReference>
<dbReference type="PROSITE" id="PS00361">
    <property type="entry name" value="RIBOSOMAL_S10"/>
    <property type="match status" value="1"/>
</dbReference>
<organism>
    <name type="scientific">Methanosphaerula palustris (strain ATCC BAA-1556 / DSM 19958 / E1-9c)</name>
    <dbReference type="NCBI Taxonomy" id="521011"/>
    <lineage>
        <taxon>Archaea</taxon>
        <taxon>Methanobacteriati</taxon>
        <taxon>Methanobacteriota</taxon>
        <taxon>Stenosarchaea group</taxon>
        <taxon>Methanomicrobia</taxon>
        <taxon>Methanomicrobiales</taxon>
        <taxon>Methanoregulaceae</taxon>
        <taxon>Methanosphaerula</taxon>
    </lineage>
</organism>
<keyword id="KW-1185">Reference proteome</keyword>
<keyword id="KW-0687">Ribonucleoprotein</keyword>
<keyword id="KW-0689">Ribosomal protein</keyword>
<comment type="function">
    <text evidence="1">Involved in the binding of tRNA to the ribosomes.</text>
</comment>
<comment type="subunit">
    <text evidence="1">Part of the 30S ribosomal subunit.</text>
</comment>
<comment type="similarity">
    <text evidence="1">Belongs to the universal ribosomal protein uS10 family.</text>
</comment>
<proteinExistence type="inferred from homology"/>
<sequence length="102" mass="11715">MQKARIRLTGTDFNKVEMVCDKIREIAERTGVNLAGPIPLPTKRLVVPIRKSPDGEGTATWDRWQMRVHKRLIDIDADERALRQLMRIQVPKDIGIEIVLES</sequence>
<feature type="chain" id="PRO_1000146064" description="Small ribosomal subunit protein uS10">
    <location>
        <begin position="1"/>
        <end position="102"/>
    </location>
</feature>
<protein>
    <recommendedName>
        <fullName evidence="1">Small ribosomal subunit protein uS10</fullName>
    </recommendedName>
    <alternativeName>
        <fullName evidence="2">30S ribosomal protein S10</fullName>
    </alternativeName>
</protein>
<accession>B8GIQ4</accession>
<name>RS10_METPE</name>